<feature type="chain" id="PRO_1000164944" description="CTP synthase">
    <location>
        <begin position="1"/>
        <end position="545"/>
    </location>
</feature>
<feature type="domain" description="Glutamine amidotransferase type-1" evidence="1">
    <location>
        <begin position="291"/>
        <end position="542"/>
    </location>
</feature>
<feature type="region of interest" description="Amidoligase domain" evidence="1">
    <location>
        <begin position="1"/>
        <end position="266"/>
    </location>
</feature>
<feature type="active site" description="Nucleophile; for glutamine hydrolysis" evidence="1">
    <location>
        <position position="379"/>
    </location>
</feature>
<feature type="active site" evidence="1">
    <location>
        <position position="515"/>
    </location>
</feature>
<feature type="active site" evidence="1">
    <location>
        <position position="517"/>
    </location>
</feature>
<feature type="binding site" evidence="1">
    <location>
        <position position="14"/>
    </location>
    <ligand>
        <name>CTP</name>
        <dbReference type="ChEBI" id="CHEBI:37563"/>
        <note>allosteric inhibitor</note>
    </ligand>
</feature>
<feature type="binding site" evidence="1">
    <location>
        <position position="14"/>
    </location>
    <ligand>
        <name>UTP</name>
        <dbReference type="ChEBI" id="CHEBI:46398"/>
    </ligand>
</feature>
<feature type="binding site" evidence="1">
    <location>
        <begin position="15"/>
        <end position="20"/>
    </location>
    <ligand>
        <name>ATP</name>
        <dbReference type="ChEBI" id="CHEBI:30616"/>
    </ligand>
</feature>
<feature type="binding site" evidence="1">
    <location>
        <position position="72"/>
    </location>
    <ligand>
        <name>ATP</name>
        <dbReference type="ChEBI" id="CHEBI:30616"/>
    </ligand>
</feature>
<feature type="binding site" evidence="1">
    <location>
        <position position="72"/>
    </location>
    <ligand>
        <name>Mg(2+)</name>
        <dbReference type="ChEBI" id="CHEBI:18420"/>
    </ligand>
</feature>
<feature type="binding site" evidence="1">
    <location>
        <position position="140"/>
    </location>
    <ligand>
        <name>Mg(2+)</name>
        <dbReference type="ChEBI" id="CHEBI:18420"/>
    </ligand>
</feature>
<feature type="binding site" evidence="1">
    <location>
        <begin position="147"/>
        <end position="149"/>
    </location>
    <ligand>
        <name>CTP</name>
        <dbReference type="ChEBI" id="CHEBI:37563"/>
        <note>allosteric inhibitor</note>
    </ligand>
</feature>
<feature type="binding site" evidence="1">
    <location>
        <begin position="187"/>
        <end position="192"/>
    </location>
    <ligand>
        <name>CTP</name>
        <dbReference type="ChEBI" id="CHEBI:37563"/>
        <note>allosteric inhibitor</note>
    </ligand>
</feature>
<feature type="binding site" evidence="1">
    <location>
        <begin position="187"/>
        <end position="192"/>
    </location>
    <ligand>
        <name>UTP</name>
        <dbReference type="ChEBI" id="CHEBI:46398"/>
    </ligand>
</feature>
<feature type="binding site" evidence="1">
    <location>
        <position position="223"/>
    </location>
    <ligand>
        <name>CTP</name>
        <dbReference type="ChEBI" id="CHEBI:37563"/>
        <note>allosteric inhibitor</note>
    </ligand>
</feature>
<feature type="binding site" evidence="1">
    <location>
        <position position="223"/>
    </location>
    <ligand>
        <name>UTP</name>
        <dbReference type="ChEBI" id="CHEBI:46398"/>
    </ligand>
</feature>
<feature type="binding site" evidence="1">
    <location>
        <begin position="239"/>
        <end position="241"/>
    </location>
    <ligand>
        <name>ATP</name>
        <dbReference type="ChEBI" id="CHEBI:30616"/>
    </ligand>
</feature>
<feature type="binding site" evidence="1">
    <location>
        <position position="352"/>
    </location>
    <ligand>
        <name>L-glutamine</name>
        <dbReference type="ChEBI" id="CHEBI:58359"/>
    </ligand>
</feature>
<feature type="binding site" evidence="1">
    <location>
        <begin position="380"/>
        <end position="383"/>
    </location>
    <ligand>
        <name>L-glutamine</name>
        <dbReference type="ChEBI" id="CHEBI:58359"/>
    </ligand>
</feature>
<feature type="binding site" evidence="1">
    <location>
        <position position="403"/>
    </location>
    <ligand>
        <name>L-glutamine</name>
        <dbReference type="ChEBI" id="CHEBI:58359"/>
    </ligand>
</feature>
<feature type="binding site" evidence="1">
    <location>
        <position position="470"/>
    </location>
    <ligand>
        <name>L-glutamine</name>
        <dbReference type="ChEBI" id="CHEBI:58359"/>
    </ligand>
</feature>
<organism>
    <name type="scientific">Escherichia coli O81 (strain ED1a)</name>
    <dbReference type="NCBI Taxonomy" id="585397"/>
    <lineage>
        <taxon>Bacteria</taxon>
        <taxon>Pseudomonadati</taxon>
        <taxon>Pseudomonadota</taxon>
        <taxon>Gammaproteobacteria</taxon>
        <taxon>Enterobacterales</taxon>
        <taxon>Enterobacteriaceae</taxon>
        <taxon>Escherichia</taxon>
    </lineage>
</organism>
<sequence length="545" mass="60374">MTTNYIFVTGGVVSSLGKGIAAASLAAILEARGLNVTIMKLDPYINVDPGTMSPIQHGEVFVTEDGAETDLDLGHYERFIRTKMSRRNNFTTGRIYSDVLRKERRGDYLGATVQVIPHITNAIKERVLEGGEGHDVVLVEIGGTVGDIESLPFLEAIRQMAVEIGREHTLFMHLTLVPYMAASGEVKTKPTQHSVKELLSIGIQPDILICRSDRAVPANERAKIALFCNVPEKAVISLKDVDSIYKIPGLLKSQGLDDYICKRFSLNCPEANLSEWEQVIFEEANPVSEVTIGMVGKYIELPDAYKSVIEALKHGGLKNRVSVNIKLIDSQDVETRGVEILKGLDAILVPGGFGYRGVEGMITTARFARENNIPYLGICLGMQVALIDYARHVANMENANSTEFVPDCKYPVVALITEWRDENGNVEVRSEKSDLGGTMRLGAQQCQLVDDSLVRQLYNAPTIVERHRHRYEVNNMLLKQIEDAGLRVAGRSGDDQLVEIIEVPNHPWFVACQFHPEFTSTPRDGHPLFAGFVKAASEFQKRQAK</sequence>
<dbReference type="EC" id="6.3.4.2" evidence="1"/>
<dbReference type="EMBL" id="CU928162">
    <property type="protein sequence ID" value="CAR09393.2"/>
    <property type="molecule type" value="Genomic_DNA"/>
</dbReference>
<dbReference type="RefSeq" id="WP_000210878.1">
    <property type="nucleotide sequence ID" value="NC_011745.1"/>
</dbReference>
<dbReference type="SMR" id="B7MZ76"/>
<dbReference type="MEROPS" id="C26.964"/>
<dbReference type="GeneID" id="93779218"/>
<dbReference type="KEGG" id="ecq:ECED1_3233"/>
<dbReference type="HOGENOM" id="CLU_011675_5_0_6"/>
<dbReference type="UniPathway" id="UPA00159">
    <property type="reaction ID" value="UER00277"/>
</dbReference>
<dbReference type="Proteomes" id="UP000000748">
    <property type="component" value="Chromosome"/>
</dbReference>
<dbReference type="GO" id="GO:0005829">
    <property type="term" value="C:cytosol"/>
    <property type="evidence" value="ECO:0007669"/>
    <property type="project" value="TreeGrafter"/>
</dbReference>
<dbReference type="GO" id="GO:0005524">
    <property type="term" value="F:ATP binding"/>
    <property type="evidence" value="ECO:0007669"/>
    <property type="project" value="UniProtKB-KW"/>
</dbReference>
<dbReference type="GO" id="GO:0003883">
    <property type="term" value="F:CTP synthase activity"/>
    <property type="evidence" value="ECO:0007669"/>
    <property type="project" value="UniProtKB-UniRule"/>
</dbReference>
<dbReference type="GO" id="GO:0004359">
    <property type="term" value="F:glutaminase activity"/>
    <property type="evidence" value="ECO:0007669"/>
    <property type="project" value="RHEA"/>
</dbReference>
<dbReference type="GO" id="GO:0042802">
    <property type="term" value="F:identical protein binding"/>
    <property type="evidence" value="ECO:0007669"/>
    <property type="project" value="TreeGrafter"/>
</dbReference>
<dbReference type="GO" id="GO:0046872">
    <property type="term" value="F:metal ion binding"/>
    <property type="evidence" value="ECO:0007669"/>
    <property type="project" value="UniProtKB-KW"/>
</dbReference>
<dbReference type="GO" id="GO:0044210">
    <property type="term" value="P:'de novo' CTP biosynthetic process"/>
    <property type="evidence" value="ECO:0007669"/>
    <property type="project" value="UniProtKB-UniRule"/>
</dbReference>
<dbReference type="GO" id="GO:0019856">
    <property type="term" value="P:pyrimidine nucleobase biosynthetic process"/>
    <property type="evidence" value="ECO:0007669"/>
    <property type="project" value="TreeGrafter"/>
</dbReference>
<dbReference type="CDD" id="cd03113">
    <property type="entry name" value="CTPS_N"/>
    <property type="match status" value="1"/>
</dbReference>
<dbReference type="CDD" id="cd01746">
    <property type="entry name" value="GATase1_CTP_Synthase"/>
    <property type="match status" value="1"/>
</dbReference>
<dbReference type="FunFam" id="3.40.50.300:FF:000009">
    <property type="entry name" value="CTP synthase"/>
    <property type="match status" value="1"/>
</dbReference>
<dbReference type="FunFam" id="3.40.50.880:FF:000002">
    <property type="entry name" value="CTP synthase"/>
    <property type="match status" value="1"/>
</dbReference>
<dbReference type="Gene3D" id="3.40.50.880">
    <property type="match status" value="1"/>
</dbReference>
<dbReference type="Gene3D" id="3.40.50.300">
    <property type="entry name" value="P-loop containing nucleotide triphosphate hydrolases"/>
    <property type="match status" value="1"/>
</dbReference>
<dbReference type="HAMAP" id="MF_01227">
    <property type="entry name" value="PyrG"/>
    <property type="match status" value="1"/>
</dbReference>
<dbReference type="InterPro" id="IPR029062">
    <property type="entry name" value="Class_I_gatase-like"/>
</dbReference>
<dbReference type="InterPro" id="IPR004468">
    <property type="entry name" value="CTP_synthase"/>
</dbReference>
<dbReference type="InterPro" id="IPR017456">
    <property type="entry name" value="CTP_synthase_N"/>
</dbReference>
<dbReference type="InterPro" id="IPR017926">
    <property type="entry name" value="GATASE"/>
</dbReference>
<dbReference type="InterPro" id="IPR033828">
    <property type="entry name" value="GATase1_CTP_Synthase"/>
</dbReference>
<dbReference type="InterPro" id="IPR027417">
    <property type="entry name" value="P-loop_NTPase"/>
</dbReference>
<dbReference type="NCBIfam" id="NF003792">
    <property type="entry name" value="PRK05380.1"/>
    <property type="match status" value="1"/>
</dbReference>
<dbReference type="NCBIfam" id="TIGR00337">
    <property type="entry name" value="PyrG"/>
    <property type="match status" value="1"/>
</dbReference>
<dbReference type="PANTHER" id="PTHR11550">
    <property type="entry name" value="CTP SYNTHASE"/>
    <property type="match status" value="1"/>
</dbReference>
<dbReference type="PANTHER" id="PTHR11550:SF0">
    <property type="entry name" value="CTP SYNTHASE-RELATED"/>
    <property type="match status" value="1"/>
</dbReference>
<dbReference type="Pfam" id="PF06418">
    <property type="entry name" value="CTP_synth_N"/>
    <property type="match status" value="1"/>
</dbReference>
<dbReference type="Pfam" id="PF00117">
    <property type="entry name" value="GATase"/>
    <property type="match status" value="1"/>
</dbReference>
<dbReference type="SUPFAM" id="SSF52317">
    <property type="entry name" value="Class I glutamine amidotransferase-like"/>
    <property type="match status" value="1"/>
</dbReference>
<dbReference type="SUPFAM" id="SSF52540">
    <property type="entry name" value="P-loop containing nucleoside triphosphate hydrolases"/>
    <property type="match status" value="1"/>
</dbReference>
<dbReference type="PROSITE" id="PS51273">
    <property type="entry name" value="GATASE_TYPE_1"/>
    <property type="match status" value="1"/>
</dbReference>
<protein>
    <recommendedName>
        <fullName evidence="1">CTP synthase</fullName>
        <ecNumber evidence="1">6.3.4.2</ecNumber>
    </recommendedName>
    <alternativeName>
        <fullName evidence="1">Cytidine 5'-triphosphate synthase</fullName>
    </alternativeName>
    <alternativeName>
        <fullName evidence="1">Cytidine triphosphate synthetase</fullName>
        <shortName evidence="1">CTP synthetase</shortName>
        <shortName evidence="1">CTPS</shortName>
    </alternativeName>
    <alternativeName>
        <fullName evidence="1">UTP--ammonia ligase</fullName>
    </alternativeName>
</protein>
<name>PYRG_ECO81</name>
<gene>
    <name evidence="1" type="primary">pyrG</name>
    <name type="ordered locus">ECED1_3233</name>
</gene>
<comment type="function">
    <text evidence="1">Catalyzes the ATP-dependent amination of UTP to CTP with either L-glutamine or ammonia as the source of nitrogen. Regulates intracellular CTP levels through interactions with the four ribonucleotide triphosphates.</text>
</comment>
<comment type="catalytic activity">
    <reaction evidence="1">
        <text>UTP + L-glutamine + ATP + H2O = CTP + L-glutamate + ADP + phosphate + 2 H(+)</text>
        <dbReference type="Rhea" id="RHEA:26426"/>
        <dbReference type="ChEBI" id="CHEBI:15377"/>
        <dbReference type="ChEBI" id="CHEBI:15378"/>
        <dbReference type="ChEBI" id="CHEBI:29985"/>
        <dbReference type="ChEBI" id="CHEBI:30616"/>
        <dbReference type="ChEBI" id="CHEBI:37563"/>
        <dbReference type="ChEBI" id="CHEBI:43474"/>
        <dbReference type="ChEBI" id="CHEBI:46398"/>
        <dbReference type="ChEBI" id="CHEBI:58359"/>
        <dbReference type="ChEBI" id="CHEBI:456216"/>
        <dbReference type="EC" id="6.3.4.2"/>
    </reaction>
</comment>
<comment type="catalytic activity">
    <reaction evidence="1">
        <text>L-glutamine + H2O = L-glutamate + NH4(+)</text>
        <dbReference type="Rhea" id="RHEA:15889"/>
        <dbReference type="ChEBI" id="CHEBI:15377"/>
        <dbReference type="ChEBI" id="CHEBI:28938"/>
        <dbReference type="ChEBI" id="CHEBI:29985"/>
        <dbReference type="ChEBI" id="CHEBI:58359"/>
    </reaction>
</comment>
<comment type="catalytic activity">
    <reaction evidence="1">
        <text>UTP + NH4(+) + ATP = CTP + ADP + phosphate + 2 H(+)</text>
        <dbReference type="Rhea" id="RHEA:16597"/>
        <dbReference type="ChEBI" id="CHEBI:15378"/>
        <dbReference type="ChEBI" id="CHEBI:28938"/>
        <dbReference type="ChEBI" id="CHEBI:30616"/>
        <dbReference type="ChEBI" id="CHEBI:37563"/>
        <dbReference type="ChEBI" id="CHEBI:43474"/>
        <dbReference type="ChEBI" id="CHEBI:46398"/>
        <dbReference type="ChEBI" id="CHEBI:456216"/>
    </reaction>
</comment>
<comment type="activity regulation">
    <text evidence="1">Allosterically activated by GTP, when glutamine is the substrate; GTP has no effect on the reaction when ammonia is the substrate. The allosteric effector GTP functions by stabilizing the protein conformation that binds the tetrahedral intermediate(s) formed during glutamine hydrolysis. Inhibited by the product CTP, via allosteric rather than competitive inhibition.</text>
</comment>
<comment type="pathway">
    <text evidence="1">Pyrimidine metabolism; CTP biosynthesis via de novo pathway; CTP from UDP: step 2/2.</text>
</comment>
<comment type="subunit">
    <text evidence="1">Homotetramer.</text>
</comment>
<comment type="miscellaneous">
    <text evidence="1">CTPSs have evolved a hybrid strategy for distinguishing between UTP and CTP. The overlapping regions of the product feedback inhibitory and substrate sites recognize a common feature in both compounds, the triphosphate moiety. To differentiate isosteric substrate and product pyrimidine rings, an additional pocket far from the expected kinase/ligase catalytic site, specifically recognizes the cytosine and ribose portions of the product inhibitor.</text>
</comment>
<comment type="similarity">
    <text evidence="1">Belongs to the CTP synthase family.</text>
</comment>
<reference key="1">
    <citation type="journal article" date="2009" name="PLoS Genet.">
        <title>Organised genome dynamics in the Escherichia coli species results in highly diverse adaptive paths.</title>
        <authorList>
            <person name="Touchon M."/>
            <person name="Hoede C."/>
            <person name="Tenaillon O."/>
            <person name="Barbe V."/>
            <person name="Baeriswyl S."/>
            <person name="Bidet P."/>
            <person name="Bingen E."/>
            <person name="Bonacorsi S."/>
            <person name="Bouchier C."/>
            <person name="Bouvet O."/>
            <person name="Calteau A."/>
            <person name="Chiapello H."/>
            <person name="Clermont O."/>
            <person name="Cruveiller S."/>
            <person name="Danchin A."/>
            <person name="Diard M."/>
            <person name="Dossat C."/>
            <person name="Karoui M.E."/>
            <person name="Frapy E."/>
            <person name="Garry L."/>
            <person name="Ghigo J.M."/>
            <person name="Gilles A.M."/>
            <person name="Johnson J."/>
            <person name="Le Bouguenec C."/>
            <person name="Lescat M."/>
            <person name="Mangenot S."/>
            <person name="Martinez-Jehanne V."/>
            <person name="Matic I."/>
            <person name="Nassif X."/>
            <person name="Oztas S."/>
            <person name="Petit M.A."/>
            <person name="Pichon C."/>
            <person name="Rouy Z."/>
            <person name="Ruf C.S."/>
            <person name="Schneider D."/>
            <person name="Tourret J."/>
            <person name="Vacherie B."/>
            <person name="Vallenet D."/>
            <person name="Medigue C."/>
            <person name="Rocha E.P.C."/>
            <person name="Denamur E."/>
        </authorList>
    </citation>
    <scope>NUCLEOTIDE SEQUENCE [LARGE SCALE GENOMIC DNA]</scope>
    <source>
        <strain>ED1a</strain>
    </source>
</reference>
<proteinExistence type="inferred from homology"/>
<evidence type="ECO:0000255" key="1">
    <source>
        <dbReference type="HAMAP-Rule" id="MF_01227"/>
    </source>
</evidence>
<accession>B7MZ76</accession>
<keyword id="KW-0067">ATP-binding</keyword>
<keyword id="KW-0315">Glutamine amidotransferase</keyword>
<keyword id="KW-0436">Ligase</keyword>
<keyword id="KW-0460">Magnesium</keyword>
<keyword id="KW-0479">Metal-binding</keyword>
<keyword id="KW-0547">Nucleotide-binding</keyword>
<keyword id="KW-0665">Pyrimidine biosynthesis</keyword>